<protein>
    <recommendedName>
        <fullName evidence="1">Formimidoylglutamase</fullName>
        <ecNumber evidence="1">3.5.3.8</ecNumber>
    </recommendedName>
    <alternativeName>
        <fullName evidence="1">Formiminoglutamase</fullName>
    </alternativeName>
    <alternativeName>
        <fullName evidence="1">Formiminoglutamate hydrolase</fullName>
    </alternativeName>
</protein>
<keyword id="KW-0369">Histidine metabolism</keyword>
<keyword id="KW-0378">Hydrolase</keyword>
<keyword id="KW-0464">Manganese</keyword>
<keyword id="KW-0479">Metal-binding</keyword>
<keyword id="KW-1185">Reference proteome</keyword>
<evidence type="ECO:0000255" key="1">
    <source>
        <dbReference type="HAMAP-Rule" id="MF_00737"/>
    </source>
</evidence>
<sequence>MLEDYYQLDNSYYQRGVEDNLYAAKWGMVIEFLNLNDPNLKPVEGVNFALIGFKSDKGVYINHGRVGAVEGPQSIRTQLAKLPWHLGRNVHVFDVGDIDGPNRSLEQLQSSLAKAVKRLRELNLRPIVLGGGHETAYGNYLGLKSSLKPEQELAVINMDAHFDLRPYDQTGPNSGTGFRQMFDETLAQKQVFNYLILGIQEHNNNLFLFDFVAKSKAIQFLTGLDIYQMGHKEVCKVVDAFLADKEQVYLTIDIDCFAAGAAPGVSAIQSLGVDPNLAVLVFQHIAASGKLIGFDVVEVSPPHDIDNHTANLAASFIFYLTQVWAQIHD</sequence>
<comment type="function">
    <text evidence="1">Catalyzes the conversion of N-formimidoyl-L-glutamate to L-glutamate and formamide.</text>
</comment>
<comment type="catalytic activity">
    <reaction evidence="1">
        <text>N-formimidoyl-L-glutamate + H2O = formamide + L-glutamate</text>
        <dbReference type="Rhea" id="RHEA:22492"/>
        <dbReference type="ChEBI" id="CHEBI:15377"/>
        <dbReference type="ChEBI" id="CHEBI:16397"/>
        <dbReference type="ChEBI" id="CHEBI:29985"/>
        <dbReference type="ChEBI" id="CHEBI:58928"/>
        <dbReference type="EC" id="3.5.3.8"/>
    </reaction>
</comment>
<comment type="cofactor">
    <cofactor evidence="1">
        <name>Mn(2+)</name>
        <dbReference type="ChEBI" id="CHEBI:29035"/>
    </cofactor>
    <text evidence="1">Binds 2 manganese ions per subunit.</text>
</comment>
<comment type="pathway">
    <text evidence="1">Amino-acid degradation; L-histidine degradation into L-glutamate; L-glutamate from N-formimidoyl-L-glutamate (hydrolase route): step 1/1.</text>
</comment>
<comment type="similarity">
    <text evidence="1">Belongs to the arginase family.</text>
</comment>
<dbReference type="EC" id="3.5.3.8" evidence="1"/>
<dbReference type="EMBL" id="CP000725">
    <property type="protein sequence ID" value="ABV11107.1"/>
    <property type="molecule type" value="Genomic_DNA"/>
</dbReference>
<dbReference type="RefSeq" id="WP_012130847.1">
    <property type="nucleotide sequence ID" value="NC_009785.1"/>
</dbReference>
<dbReference type="SMR" id="A8AZ72"/>
<dbReference type="STRING" id="467705.SGO_1813"/>
<dbReference type="KEGG" id="sgo:SGO_1813"/>
<dbReference type="eggNOG" id="COG0010">
    <property type="taxonomic scope" value="Bacteria"/>
</dbReference>
<dbReference type="HOGENOM" id="CLU_039478_2_0_9"/>
<dbReference type="UniPathway" id="UPA00379">
    <property type="reaction ID" value="UER00552"/>
</dbReference>
<dbReference type="Proteomes" id="UP000001131">
    <property type="component" value="Chromosome"/>
</dbReference>
<dbReference type="GO" id="GO:0008783">
    <property type="term" value="F:agmatinase activity"/>
    <property type="evidence" value="ECO:0007669"/>
    <property type="project" value="TreeGrafter"/>
</dbReference>
<dbReference type="GO" id="GO:0050415">
    <property type="term" value="F:formimidoylglutamase activity"/>
    <property type="evidence" value="ECO:0007669"/>
    <property type="project" value="UniProtKB-UniRule"/>
</dbReference>
<dbReference type="GO" id="GO:0030145">
    <property type="term" value="F:manganese ion binding"/>
    <property type="evidence" value="ECO:0007669"/>
    <property type="project" value="UniProtKB-UniRule"/>
</dbReference>
<dbReference type="GO" id="GO:0019556">
    <property type="term" value="P:L-histidine catabolic process to glutamate and formamide"/>
    <property type="evidence" value="ECO:0007669"/>
    <property type="project" value="UniProtKB-UniPathway"/>
</dbReference>
<dbReference type="GO" id="GO:0019557">
    <property type="term" value="P:L-histidine catabolic process to glutamate and formate"/>
    <property type="evidence" value="ECO:0007669"/>
    <property type="project" value="UniProtKB-UniPathway"/>
</dbReference>
<dbReference type="GO" id="GO:0033389">
    <property type="term" value="P:putrescine biosynthetic process from arginine, via agmatine"/>
    <property type="evidence" value="ECO:0007669"/>
    <property type="project" value="TreeGrafter"/>
</dbReference>
<dbReference type="CDD" id="cd09988">
    <property type="entry name" value="Formimidoylglutamase"/>
    <property type="match status" value="1"/>
</dbReference>
<dbReference type="Gene3D" id="3.40.800.10">
    <property type="entry name" value="Ureohydrolase domain"/>
    <property type="match status" value="1"/>
</dbReference>
<dbReference type="HAMAP" id="MF_00737">
    <property type="entry name" value="Formimidoylglutam"/>
    <property type="match status" value="1"/>
</dbReference>
<dbReference type="InterPro" id="IPR005923">
    <property type="entry name" value="HutG"/>
</dbReference>
<dbReference type="InterPro" id="IPR006035">
    <property type="entry name" value="Ureohydrolase"/>
</dbReference>
<dbReference type="InterPro" id="IPR023696">
    <property type="entry name" value="Ureohydrolase_dom_sf"/>
</dbReference>
<dbReference type="InterPro" id="IPR020855">
    <property type="entry name" value="Ureohydrolase_Mn_BS"/>
</dbReference>
<dbReference type="NCBIfam" id="TIGR01227">
    <property type="entry name" value="hutG"/>
    <property type="match status" value="1"/>
</dbReference>
<dbReference type="NCBIfam" id="NF010347">
    <property type="entry name" value="PRK13775.1"/>
    <property type="match status" value="1"/>
</dbReference>
<dbReference type="PANTHER" id="PTHR11358">
    <property type="entry name" value="ARGINASE/AGMATINASE"/>
    <property type="match status" value="1"/>
</dbReference>
<dbReference type="PANTHER" id="PTHR11358:SF35">
    <property type="entry name" value="FORMIMIDOYLGLUTAMASE"/>
    <property type="match status" value="1"/>
</dbReference>
<dbReference type="Pfam" id="PF00491">
    <property type="entry name" value="Arginase"/>
    <property type="match status" value="1"/>
</dbReference>
<dbReference type="PIRSF" id="PIRSF036979">
    <property type="entry name" value="Arginase"/>
    <property type="match status" value="1"/>
</dbReference>
<dbReference type="PRINTS" id="PR00116">
    <property type="entry name" value="ARGINASE"/>
</dbReference>
<dbReference type="SUPFAM" id="SSF52768">
    <property type="entry name" value="Arginase/deacetylase"/>
    <property type="match status" value="1"/>
</dbReference>
<dbReference type="PROSITE" id="PS01053">
    <property type="entry name" value="ARGINASE_1"/>
    <property type="match status" value="1"/>
</dbReference>
<dbReference type="PROSITE" id="PS51409">
    <property type="entry name" value="ARGINASE_2"/>
    <property type="match status" value="1"/>
</dbReference>
<proteinExistence type="inferred from homology"/>
<feature type="chain" id="PRO_1000083418" description="Formimidoylglutamase">
    <location>
        <begin position="1"/>
        <end position="329"/>
    </location>
</feature>
<feature type="binding site" evidence="1">
    <location>
        <position position="133"/>
    </location>
    <ligand>
        <name>Mn(2+)</name>
        <dbReference type="ChEBI" id="CHEBI:29035"/>
        <label>1</label>
    </ligand>
</feature>
<feature type="binding site" evidence="1">
    <location>
        <position position="159"/>
    </location>
    <ligand>
        <name>Mn(2+)</name>
        <dbReference type="ChEBI" id="CHEBI:29035"/>
        <label>1</label>
    </ligand>
</feature>
<feature type="binding site" evidence="1">
    <location>
        <position position="159"/>
    </location>
    <ligand>
        <name>Mn(2+)</name>
        <dbReference type="ChEBI" id="CHEBI:29035"/>
        <label>2</label>
    </ligand>
</feature>
<feature type="binding site" evidence="1">
    <location>
        <position position="161"/>
    </location>
    <ligand>
        <name>Mn(2+)</name>
        <dbReference type="ChEBI" id="CHEBI:29035"/>
        <label>2</label>
    </ligand>
</feature>
<feature type="binding site" evidence="1">
    <location>
        <position position="163"/>
    </location>
    <ligand>
        <name>Mn(2+)</name>
        <dbReference type="ChEBI" id="CHEBI:29035"/>
        <label>1</label>
    </ligand>
</feature>
<feature type="binding site" evidence="1">
    <location>
        <position position="253"/>
    </location>
    <ligand>
        <name>Mn(2+)</name>
        <dbReference type="ChEBI" id="CHEBI:29035"/>
        <label>1</label>
    </ligand>
</feature>
<feature type="binding site" evidence="1">
    <location>
        <position position="253"/>
    </location>
    <ligand>
        <name>Mn(2+)</name>
        <dbReference type="ChEBI" id="CHEBI:29035"/>
        <label>2</label>
    </ligand>
</feature>
<feature type="binding site" evidence="1">
    <location>
        <position position="255"/>
    </location>
    <ligand>
        <name>Mn(2+)</name>
        <dbReference type="ChEBI" id="CHEBI:29035"/>
        <label>2</label>
    </ligand>
</feature>
<organism>
    <name type="scientific">Streptococcus gordonii (strain Challis / ATCC 35105 / BCRC 15272 / CH1 / DL1 / V288)</name>
    <dbReference type="NCBI Taxonomy" id="467705"/>
    <lineage>
        <taxon>Bacteria</taxon>
        <taxon>Bacillati</taxon>
        <taxon>Bacillota</taxon>
        <taxon>Bacilli</taxon>
        <taxon>Lactobacillales</taxon>
        <taxon>Streptococcaceae</taxon>
        <taxon>Streptococcus</taxon>
    </lineage>
</organism>
<gene>
    <name evidence="1" type="primary">hutG</name>
    <name type="ordered locus">SGO_1813</name>
</gene>
<accession>A8AZ72</accession>
<reference key="1">
    <citation type="journal article" date="2007" name="J. Bacteriol.">
        <title>Genome-wide transcriptional changes in Streptococcus gordonii in response to competence signaling peptide.</title>
        <authorList>
            <person name="Vickerman M.M."/>
            <person name="Iobst S."/>
            <person name="Jesionowski A.M."/>
            <person name="Gill S.R."/>
        </authorList>
    </citation>
    <scope>NUCLEOTIDE SEQUENCE [LARGE SCALE GENOMIC DNA]</scope>
    <source>
        <strain>Challis / ATCC 35105 / BCRC 15272 / CH1 / DL1 / V288</strain>
    </source>
</reference>
<name>HUTG_STRGC</name>